<feature type="signal peptide" evidence="3">
    <location>
        <begin position="1"/>
        <end status="unknown"/>
    </location>
</feature>
<feature type="chain" id="PRO_0000050561" description="Macrodontain-1">
    <location>
        <begin status="unknown"/>
        <end position="213"/>
    </location>
</feature>
<feature type="active site" evidence="4">
    <location>
        <position position="26"/>
    </location>
</feature>
<feature type="active site" evidence="5">
    <location>
        <position position="159"/>
    </location>
</feature>
<feature type="active site" evidence="6">
    <location>
        <position position="176"/>
    </location>
</feature>
<feature type="disulfide bond" evidence="2">
    <location>
        <begin position="23"/>
        <end position="63"/>
    </location>
</feature>
<feature type="disulfide bond" evidence="2">
    <location>
        <begin position="57"/>
        <end position="96"/>
    </location>
</feature>
<feature type="disulfide bond" evidence="2">
    <location>
        <begin position="153"/>
        <end position="201"/>
    </location>
</feature>
<evidence type="ECO:0000250" key="1">
    <source>
        <dbReference type="UniProtKB" id="P80884"/>
    </source>
</evidence>
<evidence type="ECO:0000250" key="2">
    <source>
        <dbReference type="UniProtKB" id="P84346"/>
    </source>
</evidence>
<evidence type="ECO:0000255" key="3"/>
<evidence type="ECO:0000255" key="4">
    <source>
        <dbReference type="PROSITE-ProRule" id="PRU10088"/>
    </source>
</evidence>
<evidence type="ECO:0000255" key="5">
    <source>
        <dbReference type="PROSITE-ProRule" id="PRU10089"/>
    </source>
</evidence>
<evidence type="ECO:0000255" key="6">
    <source>
        <dbReference type="PROSITE-ProRule" id="PRU10090"/>
    </source>
</evidence>
<evidence type="ECO:0000269" key="7">
    <source>
    </source>
</evidence>
<evidence type="ECO:0000269" key="8">
    <source>
    </source>
</evidence>
<evidence type="ECO:0000305" key="9"/>
<proteinExistence type="evidence at protein level"/>
<reference evidence="9" key="1">
    <citation type="journal article" date="2018" name="Appl. Biochem. Biotechnol.">
        <title>Structural properties of macrodontain I, a cysteine protease from Pseudananas macrodontes (Morr.) Harms (Bromeliaceae).</title>
        <authorList>
            <person name="Errasti M.E."/>
            <person name="Natalucci C.L."/>
            <person name="Caffini N.O."/>
            <person name="Rotelli A.E."/>
            <person name="Brullo A."/>
            <person name="Maras B."/>
            <person name="Trejo S.A."/>
            <person name="Lopez L.M.I."/>
        </authorList>
    </citation>
    <scope>PROTEIN SEQUENCE</scope>
    <source>
        <tissue>Fruit</tissue>
    </source>
</reference>
<reference evidence="9" key="2">
    <citation type="journal article" date="2000" name="Protein Expr. Purif.">
        <title>Purification and characterization of macrodontain I, a cysteine peptidase from unripe fruits of Pseudananas macrodontes (Morr.) Harms (Bromeliaceae).</title>
        <authorList>
            <person name="Lopez L.M.I."/>
            <person name="Sequeiros C."/>
            <person name="Natalucci C.L."/>
            <person name="Brullo A."/>
            <person name="Maras B."/>
            <person name="Barra D."/>
            <person name="Caffini N.O."/>
        </authorList>
    </citation>
    <scope>PROTEIN SEQUENCE OF 1-27</scope>
    <scope>FUNCTION</scope>
    <scope>ACTIVITY REGULATION</scope>
    <scope>BIOPHYSICOCHEMICAL PROPERTIES</scope>
    <scope>SUBUNIT</scope>
    <scope>TISSUE SPECIFICITY</scope>
    <scope>MASS SPECTROMETRY</scope>
    <source>
        <tissue>Fruit</tissue>
    </source>
</reference>
<reference evidence="9" key="3">
    <citation type="journal article" date="2001" name="Biol. Chem.">
        <title>Comparison of two cysteine endopeptidases from Pseudananas macrodontes (Morr.) Harms (Bromeliaceae).</title>
        <authorList>
            <person name="Lopez L.M.I."/>
            <person name="Sequeiros C."/>
            <person name="Trejo S.A."/>
            <person name="Pardo M.F."/>
            <person name="Caffini N.O."/>
            <person name="Natalucci C.L."/>
        </authorList>
    </citation>
    <scope>FUNCTION</scope>
    <scope>ACTIVITY REGULATION</scope>
    <scope>BIOPHYSICOCHEMICAL PROPERTIES</scope>
    <scope>MASS SPECTROMETRY</scope>
</reference>
<organism evidence="9">
    <name type="scientific">Ananas macrodontes</name>
    <name type="common">False pineapple</name>
    <name type="synonym">Pseudananas macrodontes</name>
    <dbReference type="NCBI Taxonomy" id="203992"/>
    <lineage>
        <taxon>Eukaryota</taxon>
        <taxon>Viridiplantae</taxon>
        <taxon>Streptophyta</taxon>
        <taxon>Embryophyta</taxon>
        <taxon>Tracheophyta</taxon>
        <taxon>Spermatophyta</taxon>
        <taxon>Magnoliopsida</taxon>
        <taxon>Liliopsida</taxon>
        <taxon>Poales</taxon>
        <taxon>Bromeliaceae</taxon>
        <taxon>Bromelioideae</taxon>
        <taxon>Ananas</taxon>
    </lineage>
</organism>
<protein>
    <recommendedName>
        <fullName>Macrodontain-1</fullName>
        <ecNumber evidence="1">3.4.22.-</ecNumber>
    </recommendedName>
    <alternativeName>
        <fullName>Macrodontain I</fullName>
    </alternativeName>
</protein>
<keyword id="KW-0903">Direct protein sequencing</keyword>
<keyword id="KW-1015">Disulfide bond</keyword>
<keyword id="KW-0378">Hydrolase</keyword>
<keyword id="KW-0645">Protease</keyword>
<keyword id="KW-0732">Signal</keyword>
<keyword id="KW-0788">Thiol protease</keyword>
<name>MDO1_ANAMC</name>
<accession>P83443</accession>
<dbReference type="EC" id="3.4.22.-" evidence="1"/>
<dbReference type="SMR" id="P83443"/>
<dbReference type="MEROPS" id="C01.170"/>
<dbReference type="GO" id="GO:0004197">
    <property type="term" value="F:cysteine-type endopeptidase activity"/>
    <property type="evidence" value="ECO:0000314"/>
    <property type="project" value="UniProtKB"/>
</dbReference>
<dbReference type="GO" id="GO:0006508">
    <property type="term" value="P:proteolysis"/>
    <property type="evidence" value="ECO:0000314"/>
    <property type="project" value="UniProtKB"/>
</dbReference>
<dbReference type="CDD" id="cd02248">
    <property type="entry name" value="Peptidase_C1A"/>
    <property type="match status" value="1"/>
</dbReference>
<dbReference type="Gene3D" id="3.90.70.10">
    <property type="entry name" value="Cysteine proteinases"/>
    <property type="match status" value="1"/>
</dbReference>
<dbReference type="InterPro" id="IPR038765">
    <property type="entry name" value="Papain-like_cys_pep_sf"/>
</dbReference>
<dbReference type="InterPro" id="IPR025661">
    <property type="entry name" value="Pept_asp_AS"/>
</dbReference>
<dbReference type="InterPro" id="IPR000169">
    <property type="entry name" value="Pept_cys_AS"/>
</dbReference>
<dbReference type="InterPro" id="IPR025660">
    <property type="entry name" value="Pept_his_AS"/>
</dbReference>
<dbReference type="InterPro" id="IPR013128">
    <property type="entry name" value="Peptidase_C1A"/>
</dbReference>
<dbReference type="InterPro" id="IPR000668">
    <property type="entry name" value="Peptidase_C1A_C"/>
</dbReference>
<dbReference type="InterPro" id="IPR039417">
    <property type="entry name" value="Peptidase_C1A_papain-like"/>
</dbReference>
<dbReference type="PANTHER" id="PTHR12411">
    <property type="entry name" value="CYSTEINE PROTEASE FAMILY C1-RELATED"/>
    <property type="match status" value="1"/>
</dbReference>
<dbReference type="Pfam" id="PF00112">
    <property type="entry name" value="Peptidase_C1"/>
    <property type="match status" value="1"/>
</dbReference>
<dbReference type="PRINTS" id="PR00705">
    <property type="entry name" value="PAPAIN"/>
</dbReference>
<dbReference type="SMART" id="SM00645">
    <property type="entry name" value="Pept_C1"/>
    <property type="match status" value="1"/>
</dbReference>
<dbReference type="SUPFAM" id="SSF54001">
    <property type="entry name" value="Cysteine proteinases"/>
    <property type="match status" value="1"/>
</dbReference>
<dbReference type="PROSITE" id="PS00640">
    <property type="entry name" value="THIOL_PROTEASE_ASN"/>
    <property type="match status" value="1"/>
</dbReference>
<dbReference type="PROSITE" id="PS00139">
    <property type="entry name" value="THIOL_PROTEASE_CYS"/>
    <property type="match status" value="1"/>
</dbReference>
<dbReference type="PROSITE" id="PS00639">
    <property type="entry name" value="THIOL_PROTEASE_HIS"/>
    <property type="match status" value="1"/>
</dbReference>
<sequence>AVPQSIDWRDYGAVNEVKNQGPCGGCWAFAAIATVEGIYKIRKGNLVYLSEQEVLDCAVSYGCKGGWVNRAYDFIISNNGVTTDENYPYRAYQGTCNANYFPNSAYITGYSYVRRNDESHMMYAVSNQPIAALIDASGDNFQYYKGGVYSGPCGFSLNHAITIIGYGRDSYWIVRNSWGSSWGQGGYVRIRRDVSHSGGVCGIAMSPLFPTLQ</sequence>
<comment type="function">
    <text evidence="7 8">Cysteine protease that catalyzes the preferential cleavage: Ala-|-Xaa &gt; Gln-|-Xaa &gt; Tyr-Xaa &gt;&gt; Leu-|-Xaa &gt; Gly-|-Xaa (PubMed:10686143, PubMed:11517945). Hydrolyzes the synthetic peptide substrate Bz-Phe-Val-Arg-pNA (PubMed:11517945).</text>
</comment>
<comment type="activity regulation">
    <text evidence="7 8">Inhibited by the general cysteine protease inhibitor E64 (L-trans-epoxysuccinyl-leucylamide-(4-guanido)-butane).</text>
</comment>
<comment type="biophysicochemical properties">
    <kinetics>
        <KM evidence="8">13.4 uM for Bz-Phe-Val-Arg-pNA</KM>
    </kinetics>
    <phDependence>
        <text evidence="7 8">Optimum pH is 6.1-8.5.</text>
    </phDependence>
</comment>
<comment type="subunit">
    <text evidence="7">Monomer.</text>
</comment>
<comment type="tissue specificity">
    <text evidence="7">Fruits.</text>
</comment>
<comment type="mass spectrometry"/>
<comment type="mass spectrometry"/>
<comment type="similarity">
    <text evidence="4 5 6">Belongs to the peptidase C1 family.</text>
</comment>